<evidence type="ECO:0000255" key="1">
    <source>
        <dbReference type="HAMAP-Rule" id="MF_01155"/>
    </source>
</evidence>
<name>CBPM_SHIF8</name>
<feature type="chain" id="PRO_0000286895" description="Chaperone modulatory protein CbpM">
    <location>
        <begin position="1"/>
        <end position="101"/>
    </location>
</feature>
<gene>
    <name evidence="1" type="primary">cbpM</name>
    <name type="ordered locus">SFV_1011</name>
</gene>
<reference key="1">
    <citation type="journal article" date="2006" name="BMC Genomics">
        <title>Complete genome sequence of Shigella flexneri 5b and comparison with Shigella flexneri 2a.</title>
        <authorList>
            <person name="Nie H."/>
            <person name="Yang F."/>
            <person name="Zhang X."/>
            <person name="Yang J."/>
            <person name="Chen L."/>
            <person name="Wang J."/>
            <person name="Xiong Z."/>
            <person name="Peng J."/>
            <person name="Sun L."/>
            <person name="Dong J."/>
            <person name="Xue Y."/>
            <person name="Xu X."/>
            <person name="Chen S."/>
            <person name="Yao Z."/>
            <person name="Shen Y."/>
            <person name="Jin Q."/>
        </authorList>
    </citation>
    <scope>NUCLEOTIDE SEQUENCE [LARGE SCALE GENOMIC DNA]</scope>
    <source>
        <strain>8401</strain>
    </source>
</reference>
<protein>
    <recommendedName>
        <fullName evidence="1">Chaperone modulatory protein CbpM</fullName>
    </recommendedName>
</protein>
<accession>Q0T635</accession>
<sequence length="101" mass="11512">MANVTVTFTITEFCLHTGISEEELNEIVGLGVVEPREIQETTWVFDDHAAIVVQRAVRLRHELALDWPGIAVALTLMDDIAHLKQENRLLRQRLSRFVAHP</sequence>
<comment type="function">
    <text evidence="1">Interacts with CbpA and inhibits both the DnaJ-like co-chaperone activity and the DNA binding activity of CbpA. Together with CbpA, modulates the activity of the DnaK chaperone system. Does not inhibit the co-chaperone activity of DnaJ.</text>
</comment>
<comment type="similarity">
    <text evidence="1">Belongs to the CbpM family.</text>
</comment>
<organism>
    <name type="scientific">Shigella flexneri serotype 5b (strain 8401)</name>
    <dbReference type="NCBI Taxonomy" id="373384"/>
    <lineage>
        <taxon>Bacteria</taxon>
        <taxon>Pseudomonadati</taxon>
        <taxon>Pseudomonadota</taxon>
        <taxon>Gammaproteobacteria</taxon>
        <taxon>Enterobacterales</taxon>
        <taxon>Enterobacteriaceae</taxon>
        <taxon>Shigella</taxon>
    </lineage>
</organism>
<dbReference type="EMBL" id="CP000266">
    <property type="protein sequence ID" value="ABF03230.1"/>
    <property type="molecule type" value="Genomic_DNA"/>
</dbReference>
<dbReference type="RefSeq" id="WP_000024560.1">
    <property type="nucleotide sequence ID" value="NC_008258.1"/>
</dbReference>
<dbReference type="SMR" id="Q0T635"/>
<dbReference type="GeneID" id="93776412"/>
<dbReference type="KEGG" id="sfv:SFV_1011"/>
<dbReference type="HOGENOM" id="CLU_144710_3_1_6"/>
<dbReference type="Proteomes" id="UP000000659">
    <property type="component" value="Chromosome"/>
</dbReference>
<dbReference type="FunFam" id="1.10.1660.10:FF:000006">
    <property type="entry name" value="Chaperone modulatory protein CbpM"/>
    <property type="match status" value="1"/>
</dbReference>
<dbReference type="Gene3D" id="1.10.1660.10">
    <property type="match status" value="1"/>
</dbReference>
<dbReference type="HAMAP" id="MF_01155">
    <property type="entry name" value="CbpM"/>
    <property type="match status" value="1"/>
</dbReference>
<dbReference type="InterPro" id="IPR022835">
    <property type="entry name" value="CbpM"/>
</dbReference>
<dbReference type="NCBIfam" id="NF007617">
    <property type="entry name" value="PRK10265.1"/>
    <property type="match status" value="1"/>
</dbReference>
<dbReference type="Pfam" id="PF13591">
    <property type="entry name" value="MerR_2"/>
    <property type="match status" value="1"/>
</dbReference>
<proteinExistence type="inferred from homology"/>